<gene>
    <name type="primary">cki3</name>
    <name type="ORF">SPAC1805.05</name>
</gene>
<evidence type="ECO:0000255" key="1">
    <source>
        <dbReference type="PROSITE-ProRule" id="PRU00159"/>
    </source>
</evidence>
<evidence type="ECO:0000255" key="2">
    <source>
        <dbReference type="PROSITE-ProRule" id="PRU10027"/>
    </source>
</evidence>
<evidence type="ECO:0000256" key="3">
    <source>
        <dbReference type="SAM" id="MobiDB-lite"/>
    </source>
</evidence>
<evidence type="ECO:0000305" key="4"/>
<feature type="chain" id="PRO_0000192863" description="Casein kinase I homolog 3">
    <location>
        <begin position="1"/>
        <end position="439"/>
    </location>
</feature>
<feature type="domain" description="Protein kinase" evidence="1">
    <location>
        <begin position="15"/>
        <end position="286"/>
    </location>
</feature>
<feature type="region of interest" description="Disordered" evidence="3">
    <location>
        <begin position="366"/>
        <end position="426"/>
    </location>
</feature>
<feature type="compositionally biased region" description="Low complexity" evidence="3">
    <location>
        <begin position="372"/>
        <end position="413"/>
    </location>
</feature>
<feature type="active site" description="Proton acceptor" evidence="1 2">
    <location>
        <position position="134"/>
    </location>
</feature>
<feature type="binding site" evidence="1">
    <location>
        <begin position="21"/>
        <end position="29"/>
    </location>
    <ligand>
        <name>ATP</name>
        <dbReference type="ChEBI" id="CHEBI:30616"/>
    </ligand>
</feature>
<feature type="binding site" evidence="1">
    <location>
        <position position="44"/>
    </location>
    <ligand>
        <name>ATP</name>
        <dbReference type="ChEBI" id="CHEBI:30616"/>
    </ligand>
</feature>
<protein>
    <recommendedName>
        <fullName>Casein kinase I homolog 3</fullName>
        <ecNumber>2.7.11.1</ecNumber>
    </recommendedName>
</protein>
<accession>O74135</accession>
<keyword id="KW-0067">ATP-binding</keyword>
<keyword id="KW-0963">Cytoplasm</keyword>
<keyword id="KW-0418">Kinase</keyword>
<keyword id="KW-0547">Nucleotide-binding</keyword>
<keyword id="KW-1185">Reference proteome</keyword>
<keyword id="KW-0723">Serine/threonine-protein kinase</keyword>
<keyword id="KW-0808">Transferase</keyword>
<reference key="1">
    <citation type="journal article" date="1998" name="Gene">
        <title>Identification of a novel casein kinase-1 homolog in fission yeast Schizosaccharomyces pombe.</title>
        <authorList>
            <person name="Kitamura K."/>
            <person name="Yamashita I."/>
        </authorList>
    </citation>
    <scope>NUCLEOTIDE SEQUENCE [GENOMIC DNA]</scope>
</reference>
<reference key="2">
    <citation type="journal article" date="2002" name="Nature">
        <title>The genome sequence of Schizosaccharomyces pombe.</title>
        <authorList>
            <person name="Wood V."/>
            <person name="Gwilliam R."/>
            <person name="Rajandream M.A."/>
            <person name="Lyne M.H."/>
            <person name="Lyne R."/>
            <person name="Stewart A."/>
            <person name="Sgouros J.G."/>
            <person name="Peat N."/>
            <person name="Hayles J."/>
            <person name="Baker S.G."/>
            <person name="Basham D."/>
            <person name="Bowman S."/>
            <person name="Brooks K."/>
            <person name="Brown D."/>
            <person name="Brown S."/>
            <person name="Chillingworth T."/>
            <person name="Churcher C.M."/>
            <person name="Collins M."/>
            <person name="Connor R."/>
            <person name="Cronin A."/>
            <person name="Davis P."/>
            <person name="Feltwell T."/>
            <person name="Fraser A."/>
            <person name="Gentles S."/>
            <person name="Goble A."/>
            <person name="Hamlin N."/>
            <person name="Harris D.E."/>
            <person name="Hidalgo J."/>
            <person name="Hodgson G."/>
            <person name="Holroyd S."/>
            <person name="Hornsby T."/>
            <person name="Howarth S."/>
            <person name="Huckle E.J."/>
            <person name="Hunt S."/>
            <person name="Jagels K."/>
            <person name="James K.D."/>
            <person name="Jones L."/>
            <person name="Jones M."/>
            <person name="Leather S."/>
            <person name="McDonald S."/>
            <person name="McLean J."/>
            <person name="Mooney P."/>
            <person name="Moule S."/>
            <person name="Mungall K.L."/>
            <person name="Murphy L.D."/>
            <person name="Niblett D."/>
            <person name="Odell C."/>
            <person name="Oliver K."/>
            <person name="O'Neil S."/>
            <person name="Pearson D."/>
            <person name="Quail M.A."/>
            <person name="Rabbinowitsch E."/>
            <person name="Rutherford K.M."/>
            <person name="Rutter S."/>
            <person name="Saunders D."/>
            <person name="Seeger K."/>
            <person name="Sharp S."/>
            <person name="Skelton J."/>
            <person name="Simmonds M.N."/>
            <person name="Squares R."/>
            <person name="Squares S."/>
            <person name="Stevens K."/>
            <person name="Taylor K."/>
            <person name="Taylor R.G."/>
            <person name="Tivey A."/>
            <person name="Walsh S.V."/>
            <person name="Warren T."/>
            <person name="Whitehead S."/>
            <person name="Woodward J.R."/>
            <person name="Volckaert G."/>
            <person name="Aert R."/>
            <person name="Robben J."/>
            <person name="Grymonprez B."/>
            <person name="Weltjens I."/>
            <person name="Vanstreels E."/>
            <person name="Rieger M."/>
            <person name="Schaefer M."/>
            <person name="Mueller-Auer S."/>
            <person name="Gabel C."/>
            <person name="Fuchs M."/>
            <person name="Duesterhoeft A."/>
            <person name="Fritzc C."/>
            <person name="Holzer E."/>
            <person name="Moestl D."/>
            <person name="Hilbert H."/>
            <person name="Borzym K."/>
            <person name="Langer I."/>
            <person name="Beck A."/>
            <person name="Lehrach H."/>
            <person name="Reinhardt R."/>
            <person name="Pohl T.M."/>
            <person name="Eger P."/>
            <person name="Zimmermann W."/>
            <person name="Wedler H."/>
            <person name="Wambutt R."/>
            <person name="Purnelle B."/>
            <person name="Goffeau A."/>
            <person name="Cadieu E."/>
            <person name="Dreano S."/>
            <person name="Gloux S."/>
            <person name="Lelaure V."/>
            <person name="Mottier S."/>
            <person name="Galibert F."/>
            <person name="Aves S.J."/>
            <person name="Xiang Z."/>
            <person name="Hunt C."/>
            <person name="Moore K."/>
            <person name="Hurst S.M."/>
            <person name="Lucas M."/>
            <person name="Rochet M."/>
            <person name="Gaillardin C."/>
            <person name="Tallada V.A."/>
            <person name="Garzon A."/>
            <person name="Thode G."/>
            <person name="Daga R.R."/>
            <person name="Cruzado L."/>
            <person name="Jimenez J."/>
            <person name="Sanchez M."/>
            <person name="del Rey F."/>
            <person name="Benito J."/>
            <person name="Dominguez A."/>
            <person name="Revuelta J.L."/>
            <person name="Moreno S."/>
            <person name="Armstrong J."/>
            <person name="Forsburg S.L."/>
            <person name="Cerutti L."/>
            <person name="Lowe T."/>
            <person name="McCombie W.R."/>
            <person name="Paulsen I."/>
            <person name="Potashkin J."/>
            <person name="Shpakovski G.V."/>
            <person name="Ussery D."/>
            <person name="Barrell B.G."/>
            <person name="Nurse P."/>
        </authorList>
    </citation>
    <scope>NUCLEOTIDE SEQUENCE [LARGE SCALE GENOMIC DNA]</scope>
    <source>
        <strain>972 / ATCC 24843</strain>
    </source>
</reference>
<comment type="function">
    <text>Casein kinases are operationally defined by their preferential utilization of acidic proteins such as caseins as substrates.</text>
</comment>
<comment type="catalytic activity">
    <reaction>
        <text>L-seryl-[protein] + ATP = O-phospho-L-seryl-[protein] + ADP + H(+)</text>
        <dbReference type="Rhea" id="RHEA:17989"/>
        <dbReference type="Rhea" id="RHEA-COMP:9863"/>
        <dbReference type="Rhea" id="RHEA-COMP:11604"/>
        <dbReference type="ChEBI" id="CHEBI:15378"/>
        <dbReference type="ChEBI" id="CHEBI:29999"/>
        <dbReference type="ChEBI" id="CHEBI:30616"/>
        <dbReference type="ChEBI" id="CHEBI:83421"/>
        <dbReference type="ChEBI" id="CHEBI:456216"/>
        <dbReference type="EC" id="2.7.11.1"/>
    </reaction>
</comment>
<comment type="catalytic activity">
    <reaction>
        <text>L-threonyl-[protein] + ATP = O-phospho-L-threonyl-[protein] + ADP + H(+)</text>
        <dbReference type="Rhea" id="RHEA:46608"/>
        <dbReference type="Rhea" id="RHEA-COMP:11060"/>
        <dbReference type="Rhea" id="RHEA-COMP:11605"/>
        <dbReference type="ChEBI" id="CHEBI:15378"/>
        <dbReference type="ChEBI" id="CHEBI:30013"/>
        <dbReference type="ChEBI" id="CHEBI:30616"/>
        <dbReference type="ChEBI" id="CHEBI:61977"/>
        <dbReference type="ChEBI" id="CHEBI:456216"/>
        <dbReference type="EC" id="2.7.11.1"/>
    </reaction>
</comment>
<comment type="subcellular location">
    <subcellularLocation>
        <location>Cytoplasm</location>
    </subcellularLocation>
</comment>
<comment type="similarity">
    <text evidence="4">Belongs to the protein kinase superfamily. CK1 Ser/Thr protein kinase family. Casein kinase I subfamily.</text>
</comment>
<proteinExistence type="inferred from homology"/>
<name>CKI3_SCHPO</name>
<sequence length="439" mass="50215">MSTTSSHSNVVGVHYRVGKKIGEGSFGMLFQGVNLINNQPIALKFESRKSEVPQLRDEYLTYKLLMGLPGIPSVYYYGQEGMYNLLVMDLLGPSLEDLFDYCGRRFSPKTVAMIAKQMITRIQSVHERHFIYRDIKPDNFLIGFPGSKTENVIYAVDFGMAKQYRDPKTHVHRPYNEHKSLSGTARYMSINTHLGREQSRRDDLESMGHVFMYFLRGSLPWQGLKAATNKQKYEKIGEKKQVTPLKELCEGYPKEFLQYMIYARNLGYEEAPDYDYLRSLFDSLLLRINETDDGKYDWTLLNNGKGWQYSAAKQHVVQRRHTQGTNNRRQSTIPPYARTRQNLLSSPSKQTPVNNVVDASVATQKDGIPGKAASPQVQQQQQTSSAQQQQPQRVEQPAPQTTQPTQVDTQQAAKPAPSKEKSRKKFHLRLLSCCISKQE</sequence>
<organism>
    <name type="scientific">Schizosaccharomyces pombe (strain 972 / ATCC 24843)</name>
    <name type="common">Fission yeast</name>
    <dbReference type="NCBI Taxonomy" id="284812"/>
    <lineage>
        <taxon>Eukaryota</taxon>
        <taxon>Fungi</taxon>
        <taxon>Dikarya</taxon>
        <taxon>Ascomycota</taxon>
        <taxon>Taphrinomycotina</taxon>
        <taxon>Schizosaccharomycetes</taxon>
        <taxon>Schizosaccharomycetales</taxon>
        <taxon>Schizosaccharomycetaceae</taxon>
        <taxon>Schizosaccharomyces</taxon>
    </lineage>
</organism>
<dbReference type="EC" id="2.7.11.1"/>
<dbReference type="EMBL" id="AB010643">
    <property type="protein sequence ID" value="BAA32482.1"/>
    <property type="molecule type" value="Genomic_DNA"/>
</dbReference>
<dbReference type="EMBL" id="CU329670">
    <property type="protein sequence ID" value="CAB55846.1"/>
    <property type="molecule type" value="Genomic_DNA"/>
</dbReference>
<dbReference type="PIR" id="T43314">
    <property type="entry name" value="T43314"/>
</dbReference>
<dbReference type="RefSeq" id="NP_593916.1">
    <property type="nucleotide sequence ID" value="NM_001019345.2"/>
</dbReference>
<dbReference type="SMR" id="O74135"/>
<dbReference type="BioGRID" id="278859">
    <property type="interactions" value="6"/>
</dbReference>
<dbReference type="FunCoup" id="O74135">
    <property type="interactions" value="464"/>
</dbReference>
<dbReference type="STRING" id="284812.O74135"/>
<dbReference type="iPTMnet" id="O74135"/>
<dbReference type="PaxDb" id="4896-SPAC1805.05.1"/>
<dbReference type="EnsemblFungi" id="SPAC1805.05.1">
    <property type="protein sequence ID" value="SPAC1805.05.1:pep"/>
    <property type="gene ID" value="SPAC1805.05"/>
</dbReference>
<dbReference type="GeneID" id="2542395"/>
<dbReference type="KEGG" id="spo:2542395"/>
<dbReference type="PomBase" id="SPAC1805.05">
    <property type="gene designation" value="cki3"/>
</dbReference>
<dbReference type="VEuPathDB" id="FungiDB:SPAC1805.05"/>
<dbReference type="eggNOG" id="KOG1165">
    <property type="taxonomic scope" value="Eukaryota"/>
</dbReference>
<dbReference type="HOGENOM" id="CLU_019279_1_0_1"/>
<dbReference type="InParanoid" id="O74135"/>
<dbReference type="OMA" id="HERHFIY"/>
<dbReference type="PhylomeDB" id="O74135"/>
<dbReference type="BRENDA" id="2.7.11.1">
    <property type="organism ID" value="5613"/>
</dbReference>
<dbReference type="PRO" id="PR:O74135"/>
<dbReference type="Proteomes" id="UP000002485">
    <property type="component" value="Chromosome I"/>
</dbReference>
<dbReference type="GO" id="GO:0032153">
    <property type="term" value="C:cell division site"/>
    <property type="evidence" value="ECO:0000314"/>
    <property type="project" value="PomBase"/>
</dbReference>
<dbReference type="GO" id="GO:0071944">
    <property type="term" value="C:cell periphery"/>
    <property type="evidence" value="ECO:0000314"/>
    <property type="project" value="PomBase"/>
</dbReference>
<dbReference type="GO" id="GO:0051286">
    <property type="term" value="C:cell tip"/>
    <property type="evidence" value="ECO:0000314"/>
    <property type="project" value="PomBase"/>
</dbReference>
<dbReference type="GO" id="GO:0005737">
    <property type="term" value="C:cytoplasm"/>
    <property type="evidence" value="ECO:0000318"/>
    <property type="project" value="GO_Central"/>
</dbReference>
<dbReference type="GO" id="GO:0005634">
    <property type="term" value="C:nucleus"/>
    <property type="evidence" value="ECO:0000318"/>
    <property type="project" value="GO_Central"/>
</dbReference>
<dbReference type="GO" id="GO:0005524">
    <property type="term" value="F:ATP binding"/>
    <property type="evidence" value="ECO:0000255"/>
    <property type="project" value="PomBase"/>
</dbReference>
<dbReference type="GO" id="GO:0004672">
    <property type="term" value="F:protein kinase activity"/>
    <property type="evidence" value="ECO:0000315"/>
    <property type="project" value="PomBase"/>
</dbReference>
<dbReference type="GO" id="GO:0106310">
    <property type="term" value="F:protein serine kinase activity"/>
    <property type="evidence" value="ECO:0007669"/>
    <property type="project" value="RHEA"/>
</dbReference>
<dbReference type="GO" id="GO:0004674">
    <property type="term" value="F:protein serine/threonine kinase activity"/>
    <property type="evidence" value="ECO:0000318"/>
    <property type="project" value="GO_Central"/>
</dbReference>
<dbReference type="GO" id="GO:0006897">
    <property type="term" value="P:endocytosis"/>
    <property type="evidence" value="ECO:0000318"/>
    <property type="project" value="GO_Central"/>
</dbReference>
<dbReference type="GO" id="GO:1904846">
    <property type="term" value="P:negative regulation of establishment of bipolar cell polarity"/>
    <property type="evidence" value="ECO:0000315"/>
    <property type="project" value="PomBase"/>
</dbReference>
<dbReference type="GO" id="GO:1903067">
    <property type="term" value="P:negative regulation of protein localization to cell tip"/>
    <property type="evidence" value="ECO:0000315"/>
    <property type="project" value="PomBase"/>
</dbReference>
<dbReference type="GO" id="GO:0030100">
    <property type="term" value="P:regulation of endocytosis"/>
    <property type="evidence" value="ECO:0000266"/>
    <property type="project" value="PomBase"/>
</dbReference>
<dbReference type="GO" id="GO:0007165">
    <property type="term" value="P:signal transduction"/>
    <property type="evidence" value="ECO:0000315"/>
    <property type="project" value="PomBase"/>
</dbReference>
<dbReference type="FunFam" id="1.10.510.10:FF:000703">
    <property type="entry name" value="Casein kinase I gamma"/>
    <property type="match status" value="1"/>
</dbReference>
<dbReference type="Gene3D" id="1.10.510.10">
    <property type="entry name" value="Transferase(Phosphotransferase) domain 1"/>
    <property type="match status" value="1"/>
</dbReference>
<dbReference type="InterPro" id="IPR050235">
    <property type="entry name" value="CK1_Ser-Thr_kinase"/>
</dbReference>
<dbReference type="InterPro" id="IPR011009">
    <property type="entry name" value="Kinase-like_dom_sf"/>
</dbReference>
<dbReference type="InterPro" id="IPR000719">
    <property type="entry name" value="Prot_kinase_dom"/>
</dbReference>
<dbReference type="InterPro" id="IPR017441">
    <property type="entry name" value="Protein_kinase_ATP_BS"/>
</dbReference>
<dbReference type="InterPro" id="IPR008271">
    <property type="entry name" value="Ser/Thr_kinase_AS"/>
</dbReference>
<dbReference type="PANTHER" id="PTHR11909">
    <property type="entry name" value="CASEIN KINASE-RELATED"/>
    <property type="match status" value="1"/>
</dbReference>
<dbReference type="Pfam" id="PF00069">
    <property type="entry name" value="Pkinase"/>
    <property type="match status" value="1"/>
</dbReference>
<dbReference type="SMART" id="SM00220">
    <property type="entry name" value="S_TKc"/>
    <property type="match status" value="1"/>
</dbReference>
<dbReference type="SUPFAM" id="SSF56112">
    <property type="entry name" value="Protein kinase-like (PK-like)"/>
    <property type="match status" value="1"/>
</dbReference>
<dbReference type="PROSITE" id="PS00107">
    <property type="entry name" value="PROTEIN_KINASE_ATP"/>
    <property type="match status" value="1"/>
</dbReference>
<dbReference type="PROSITE" id="PS50011">
    <property type="entry name" value="PROTEIN_KINASE_DOM"/>
    <property type="match status" value="1"/>
</dbReference>
<dbReference type="PROSITE" id="PS00108">
    <property type="entry name" value="PROTEIN_KINASE_ST"/>
    <property type="match status" value="1"/>
</dbReference>